<evidence type="ECO:0000255" key="1">
    <source>
        <dbReference type="HAMAP-Rule" id="MF_01379"/>
    </source>
</evidence>
<evidence type="ECO:0000305" key="2"/>
<dbReference type="EC" id="1.10.3.9" evidence="1"/>
<dbReference type="EMBL" id="CT971583">
    <property type="protein sequence ID" value="CAK23210.1"/>
    <property type="molecule type" value="Genomic_DNA"/>
</dbReference>
<dbReference type="SMR" id="A5GJU5"/>
<dbReference type="STRING" id="32051.SynWH7803_0784"/>
<dbReference type="KEGG" id="syx:SynWH7803_0784"/>
<dbReference type="eggNOG" id="ENOG502Z87P">
    <property type="taxonomic scope" value="Bacteria"/>
</dbReference>
<dbReference type="HOGENOM" id="CLU_054206_1_0_3"/>
<dbReference type="OrthoDB" id="505356at2"/>
<dbReference type="Proteomes" id="UP000001566">
    <property type="component" value="Chromosome"/>
</dbReference>
<dbReference type="GO" id="GO:0009523">
    <property type="term" value="C:photosystem II"/>
    <property type="evidence" value="ECO:0007669"/>
    <property type="project" value="UniProtKB-KW"/>
</dbReference>
<dbReference type="GO" id="GO:0031676">
    <property type="term" value="C:plasma membrane-derived thylakoid membrane"/>
    <property type="evidence" value="ECO:0007669"/>
    <property type="project" value="UniProtKB-SubCell"/>
</dbReference>
<dbReference type="GO" id="GO:0016168">
    <property type="term" value="F:chlorophyll binding"/>
    <property type="evidence" value="ECO:0007669"/>
    <property type="project" value="UniProtKB-UniRule"/>
</dbReference>
<dbReference type="GO" id="GO:0045156">
    <property type="term" value="F:electron transporter, transferring electrons within the cyclic electron transport pathway of photosynthesis activity"/>
    <property type="evidence" value="ECO:0007669"/>
    <property type="project" value="InterPro"/>
</dbReference>
<dbReference type="GO" id="GO:0005506">
    <property type="term" value="F:iron ion binding"/>
    <property type="evidence" value="ECO:0007669"/>
    <property type="project" value="UniProtKB-UniRule"/>
</dbReference>
<dbReference type="GO" id="GO:0016682">
    <property type="term" value="F:oxidoreductase activity, acting on diphenols and related substances as donors, oxygen as acceptor"/>
    <property type="evidence" value="ECO:0007669"/>
    <property type="project" value="UniProtKB-UniRule"/>
</dbReference>
<dbReference type="GO" id="GO:0010242">
    <property type="term" value="F:oxygen evolving activity"/>
    <property type="evidence" value="ECO:0007669"/>
    <property type="project" value="UniProtKB-EC"/>
</dbReference>
<dbReference type="GO" id="GO:0009772">
    <property type="term" value="P:photosynthetic electron transport in photosystem II"/>
    <property type="evidence" value="ECO:0007669"/>
    <property type="project" value="InterPro"/>
</dbReference>
<dbReference type="GO" id="GO:0009635">
    <property type="term" value="P:response to herbicide"/>
    <property type="evidence" value="ECO:0007669"/>
    <property type="project" value="UniProtKB-KW"/>
</dbReference>
<dbReference type="CDD" id="cd09289">
    <property type="entry name" value="Photosystem-II_D1"/>
    <property type="match status" value="1"/>
</dbReference>
<dbReference type="FunFam" id="1.20.85.10:FF:000002">
    <property type="entry name" value="Photosystem II protein D1"/>
    <property type="match status" value="1"/>
</dbReference>
<dbReference type="Gene3D" id="1.20.85.10">
    <property type="entry name" value="Photosystem II protein D1-like"/>
    <property type="match status" value="1"/>
</dbReference>
<dbReference type="HAMAP" id="MF_01379">
    <property type="entry name" value="PSII_PsbA_D1"/>
    <property type="match status" value="1"/>
</dbReference>
<dbReference type="InterPro" id="IPR055266">
    <property type="entry name" value="D1/D2"/>
</dbReference>
<dbReference type="InterPro" id="IPR036854">
    <property type="entry name" value="Photo_II_D1/D2_sf"/>
</dbReference>
<dbReference type="InterPro" id="IPR000484">
    <property type="entry name" value="Photo_RC_L/M"/>
</dbReference>
<dbReference type="InterPro" id="IPR055265">
    <property type="entry name" value="Photo_RC_L/M_CS"/>
</dbReference>
<dbReference type="InterPro" id="IPR005867">
    <property type="entry name" value="PSII_D1"/>
</dbReference>
<dbReference type="NCBIfam" id="TIGR01151">
    <property type="entry name" value="psbA"/>
    <property type="match status" value="1"/>
</dbReference>
<dbReference type="PANTHER" id="PTHR33149:SF12">
    <property type="entry name" value="PHOTOSYSTEM II D2 PROTEIN"/>
    <property type="match status" value="1"/>
</dbReference>
<dbReference type="PANTHER" id="PTHR33149">
    <property type="entry name" value="PHOTOSYSTEM II PROTEIN D1"/>
    <property type="match status" value="1"/>
</dbReference>
<dbReference type="Pfam" id="PF00124">
    <property type="entry name" value="Photo_RC"/>
    <property type="match status" value="1"/>
</dbReference>
<dbReference type="PRINTS" id="PR00256">
    <property type="entry name" value="REACTNCENTRE"/>
</dbReference>
<dbReference type="SUPFAM" id="SSF81483">
    <property type="entry name" value="Bacterial photosystem II reaction centre, L and M subunits"/>
    <property type="match status" value="1"/>
</dbReference>
<dbReference type="PROSITE" id="PS00244">
    <property type="entry name" value="REACTION_CENTER"/>
    <property type="match status" value="1"/>
</dbReference>
<gene>
    <name evidence="1 2" type="primary">psbA2</name>
    <name type="ordered locus">SynWH7803_0784</name>
</gene>
<reference key="1">
    <citation type="submission" date="2006-05" db="EMBL/GenBank/DDBJ databases">
        <authorList>
            <consortium name="Genoscope"/>
        </authorList>
    </citation>
    <scope>NUCLEOTIDE SEQUENCE [LARGE SCALE GENOMIC DNA]</scope>
    <source>
        <strain>WH7803</strain>
    </source>
</reference>
<feature type="chain" id="PRO_0000316418" description="Photosystem II protein D1 2" evidence="1">
    <location>
        <begin position="1"/>
        <end position="343"/>
    </location>
</feature>
<feature type="propeptide" id="PRO_0000316419" evidence="1">
    <location>
        <begin position="344"/>
        <end position="358"/>
    </location>
</feature>
<feature type="transmembrane region" description="Helical" evidence="1">
    <location>
        <begin position="28"/>
        <end position="45"/>
    </location>
</feature>
<feature type="transmembrane region" description="Helical" evidence="1">
    <location>
        <begin position="117"/>
        <end position="132"/>
    </location>
</feature>
<feature type="transmembrane region" description="Helical" evidence="1">
    <location>
        <begin position="141"/>
        <end position="155"/>
    </location>
</feature>
<feature type="transmembrane region" description="Helical" evidence="1">
    <location>
        <begin position="196"/>
        <end position="217"/>
    </location>
</feature>
<feature type="transmembrane region" description="Helical" evidence="1">
    <location>
        <begin position="273"/>
        <end position="287"/>
    </location>
</feature>
<feature type="binding site" description="axial binding residue" evidence="1">
    <location>
        <position position="117"/>
    </location>
    <ligand>
        <name>chlorophyll a</name>
        <dbReference type="ChEBI" id="CHEBI:58416"/>
        <label>ChlzD1</label>
    </ligand>
    <ligandPart>
        <name>Mg</name>
        <dbReference type="ChEBI" id="CHEBI:25107"/>
    </ligandPart>
</feature>
<feature type="binding site" evidence="1">
    <location>
        <position position="125"/>
    </location>
    <ligand>
        <name>pheophytin a</name>
        <dbReference type="ChEBI" id="CHEBI:136840"/>
        <label>D1</label>
    </ligand>
</feature>
<feature type="binding site" evidence="1">
    <location>
        <position position="169"/>
    </location>
    <ligand>
        <name>[CaMn4O5] cluster</name>
        <dbReference type="ChEBI" id="CHEBI:189552"/>
    </ligand>
</feature>
<feature type="binding site" evidence="1">
    <location>
        <position position="188"/>
    </location>
    <ligand>
        <name>[CaMn4O5] cluster</name>
        <dbReference type="ChEBI" id="CHEBI:189552"/>
    </ligand>
</feature>
<feature type="binding site" description="axial binding residue" evidence="1">
    <location>
        <position position="197"/>
    </location>
    <ligand>
        <name>chlorophyll a</name>
        <dbReference type="ChEBI" id="CHEBI:58416"/>
        <label>PD1</label>
    </ligand>
    <ligandPart>
        <name>Mg</name>
        <dbReference type="ChEBI" id="CHEBI:25107"/>
    </ligandPart>
</feature>
<feature type="binding site" evidence="1">
    <location>
        <position position="214"/>
    </location>
    <ligand>
        <name>a quinone</name>
        <dbReference type="ChEBI" id="CHEBI:132124"/>
        <label>B</label>
    </ligand>
</feature>
<feature type="binding site" evidence="1">
    <location>
        <position position="214"/>
    </location>
    <ligand>
        <name>Fe cation</name>
        <dbReference type="ChEBI" id="CHEBI:24875"/>
        <note>ligand shared with heterodimeric partner</note>
    </ligand>
</feature>
<feature type="binding site" evidence="1">
    <location>
        <begin position="263"/>
        <end position="264"/>
    </location>
    <ligand>
        <name>a quinone</name>
        <dbReference type="ChEBI" id="CHEBI:132124"/>
        <label>B</label>
    </ligand>
</feature>
<feature type="binding site" evidence="1">
    <location>
        <position position="271"/>
    </location>
    <ligand>
        <name>Fe cation</name>
        <dbReference type="ChEBI" id="CHEBI:24875"/>
        <note>ligand shared with heterodimeric partner</note>
    </ligand>
</feature>
<feature type="binding site" evidence="1">
    <location>
        <position position="331"/>
    </location>
    <ligand>
        <name>[CaMn4O5] cluster</name>
        <dbReference type="ChEBI" id="CHEBI:189552"/>
    </ligand>
</feature>
<feature type="binding site" evidence="1">
    <location>
        <position position="332"/>
    </location>
    <ligand>
        <name>[CaMn4O5] cluster</name>
        <dbReference type="ChEBI" id="CHEBI:189552"/>
    </ligand>
</feature>
<feature type="binding site" evidence="1">
    <location>
        <position position="341"/>
    </location>
    <ligand>
        <name>[CaMn4O5] cluster</name>
        <dbReference type="ChEBI" id="CHEBI:189552"/>
    </ligand>
</feature>
<feature type="binding site" evidence="1">
    <location>
        <position position="343"/>
    </location>
    <ligand>
        <name>[CaMn4O5] cluster</name>
        <dbReference type="ChEBI" id="CHEBI:189552"/>
    </ligand>
</feature>
<feature type="site" description="Tyrosine radical intermediate" evidence="1">
    <location>
        <position position="160"/>
    </location>
</feature>
<feature type="site" description="Stabilizes free radical intermediate" evidence="1">
    <location>
        <position position="189"/>
    </location>
</feature>
<feature type="site" description="Cleavage; by CtpA" evidence="1">
    <location>
        <begin position="343"/>
        <end position="344"/>
    </location>
</feature>
<comment type="function">
    <text evidence="1">Photosystem II (PSII) is a light-driven water:plastoquinone oxidoreductase that uses light energy to abstract electrons from H(2)O, generating O(2) and a proton gradient subsequently used for ATP formation. It consists of a core antenna complex that captures photons, and an electron transfer chain that converts photonic excitation into a charge separation. The D1/D2 (PsbA/PsbD) reaction center heterodimer binds P680, the primary electron donor of PSII as well as several subsequent electron acceptors.</text>
</comment>
<comment type="catalytic activity">
    <reaction evidence="1">
        <text>2 a plastoquinone + 4 hnu + 2 H2O = 2 a plastoquinol + O2</text>
        <dbReference type="Rhea" id="RHEA:36359"/>
        <dbReference type="Rhea" id="RHEA-COMP:9561"/>
        <dbReference type="Rhea" id="RHEA-COMP:9562"/>
        <dbReference type="ChEBI" id="CHEBI:15377"/>
        <dbReference type="ChEBI" id="CHEBI:15379"/>
        <dbReference type="ChEBI" id="CHEBI:17757"/>
        <dbReference type="ChEBI" id="CHEBI:30212"/>
        <dbReference type="ChEBI" id="CHEBI:62192"/>
        <dbReference type="EC" id="1.10.3.9"/>
    </reaction>
</comment>
<comment type="cofactor">
    <text evidence="1">The D1/D2 heterodimer binds P680, chlorophylls that are the primary electron donor of PSII, and subsequent electron acceptors. It shares a non-heme iron and each subunit binds pheophytin, quinone, additional chlorophylls, carotenoids and lipids. D1 provides most of the ligands for the Mn4-Ca-O5 cluster of the oxygen-evolving complex (OEC). There is also a Cl(-1) ion associated with D1 and D2, which is required for oxygen evolution. The PSII complex binds additional chlorophylls, carotenoids and specific lipids.</text>
</comment>
<comment type="subunit">
    <text evidence="1">PSII is composed of 1 copy each of membrane proteins PsbA, PsbB, PsbC, PsbD, PsbE, PsbF, PsbH, PsbI, PsbJ, PsbK, PsbL, PsbM, PsbT, PsbX, PsbY, PsbZ, Psb30/Ycf12, peripheral proteins PsbO, CyanoQ (PsbQ), PsbU, PsbV and a large number of cofactors. It forms dimeric complexes.</text>
</comment>
<comment type="subcellular location">
    <subcellularLocation>
        <location evidence="1">Cellular thylakoid membrane</location>
        <topology evidence="1">Multi-pass membrane protein</topology>
    </subcellularLocation>
</comment>
<comment type="PTM">
    <text evidence="1">Tyr-160 forms a radical intermediate that is referred to as redox-active TyrZ, YZ or Y-Z.</text>
</comment>
<comment type="PTM">
    <text evidence="1">C-terminally processed by CtpA; processing is essential to allow assembly of the oxygen-evolving complex and thus photosynthetic growth.</text>
</comment>
<comment type="miscellaneous">
    <text evidence="1">Cyanobacteria usually contain more than 2 copies of the psbA gene.</text>
</comment>
<comment type="miscellaneous">
    <text evidence="1">2 of the reaction center chlorophylls (ChlD1 and ChlD2) are entirely coordinated by water.</text>
</comment>
<comment type="miscellaneous">
    <text evidence="1">Herbicides such as atrazine, BNT, diuron or ioxynil bind in the Q(B) binding site and block subsequent electron transfer.</text>
</comment>
<comment type="similarity">
    <text evidence="1">Belongs to the reaction center PufL/M/PsbA/D family.</text>
</comment>
<organism>
    <name type="scientific">Synechococcus sp. (strain WH7803)</name>
    <dbReference type="NCBI Taxonomy" id="32051"/>
    <lineage>
        <taxon>Bacteria</taxon>
        <taxon>Bacillati</taxon>
        <taxon>Cyanobacteriota</taxon>
        <taxon>Cyanophyceae</taxon>
        <taxon>Synechococcales</taxon>
        <taxon>Synechococcaceae</taxon>
        <taxon>Synechococcus</taxon>
    </lineage>
</organism>
<proteinExistence type="inferred from homology"/>
<name>PSBA2_SYNPW</name>
<protein>
    <recommendedName>
        <fullName evidence="1">Photosystem II protein D1 2</fullName>
        <shortName evidence="1">PSII D1 protein 2</shortName>
        <ecNumber evidence="1">1.10.3.9</ecNumber>
    </recommendedName>
    <alternativeName>
        <fullName evidence="1">Photosystem II Q(B) protein 2</fullName>
    </alternativeName>
</protein>
<accession>A5GJU5</accession>
<keyword id="KW-0106">Calcium</keyword>
<keyword id="KW-0148">Chlorophyll</keyword>
<keyword id="KW-0157">Chromophore</keyword>
<keyword id="KW-0249">Electron transport</keyword>
<keyword id="KW-0359">Herbicide resistance</keyword>
<keyword id="KW-0408">Iron</keyword>
<keyword id="KW-0460">Magnesium</keyword>
<keyword id="KW-0464">Manganese</keyword>
<keyword id="KW-0472">Membrane</keyword>
<keyword id="KW-0479">Metal-binding</keyword>
<keyword id="KW-0560">Oxidoreductase</keyword>
<keyword id="KW-0602">Photosynthesis</keyword>
<keyword id="KW-0604">Photosystem II</keyword>
<keyword id="KW-1185">Reference proteome</keyword>
<keyword id="KW-0793">Thylakoid</keyword>
<keyword id="KW-0812">Transmembrane</keyword>
<keyword id="KW-1133">Transmembrane helix</keyword>
<keyword id="KW-0813">Transport</keyword>
<sequence length="358" mass="39406">MATAIRSGRIGGWERFCQWVTDTNNRIYVGWFGVLMIPCLLAATTCFIVAFIAAPAVDIDGIREPVAGSLIYGNNIISGAVVPSSNAIGLHFYPIWEAASLDEWLYNGGPYQLVVFHFLIGISAYMGRQWELSYRLGMRPWICVAYSAPLSAAFAVFLVYPFGQGSFSDGMPLGISGTFNFMLVFQAEHNILMHPFHMLGVAGVFGGSLFSAMHGSLVTSSLVRETTEAESQNYGYKFGQEEETYNIVAAHGYFGRLIFQYASFNNSRSLHFFLAAWPVVGIWFTSMGISTMAFNLNGFNFNQSVLDAQGRVLNTWADVLNRANLGMEVMHERNAHNFPLDLAATESTPVALQAPTIG</sequence>